<name>CP51_MYCVP</name>
<comment type="function">
    <text evidence="2">Sterol 14alpha-demethylase whose physiological substrate is not known. Accepts electrons from the iron-sulfur ferredoxin Fdx encoded by an adjacent gene. In vitro, catalyzes C14-demethylation of lanosterol, 24,25-dihydrolanosterol and obtusifoliol, to produce the 8,14-dienes stereoselectively.</text>
</comment>
<comment type="catalytic activity">
    <reaction evidence="2">
        <text>a 14alpha-methyl steroid + 6 reduced [2Fe-2S]-[ferredoxin] + 3 O2 + 5 H(+) = a Delta(14) steroid + formate + 6 oxidized [2Fe-2S]-[ferredoxin] + 4 H2O</text>
        <dbReference type="Rhea" id="RHEA:56752"/>
        <dbReference type="Rhea" id="RHEA-COMP:10000"/>
        <dbReference type="Rhea" id="RHEA-COMP:10001"/>
        <dbReference type="ChEBI" id="CHEBI:15377"/>
        <dbReference type="ChEBI" id="CHEBI:15378"/>
        <dbReference type="ChEBI" id="CHEBI:15379"/>
        <dbReference type="ChEBI" id="CHEBI:15740"/>
        <dbReference type="ChEBI" id="CHEBI:33737"/>
        <dbReference type="ChEBI" id="CHEBI:33738"/>
        <dbReference type="ChEBI" id="CHEBI:138029"/>
        <dbReference type="ChEBI" id="CHEBI:138031"/>
        <dbReference type="EC" id="1.14.15.36"/>
    </reaction>
</comment>
<comment type="cofactor">
    <cofactor evidence="2">
        <name>heme b</name>
        <dbReference type="ChEBI" id="CHEBI:60344"/>
    </cofactor>
</comment>
<comment type="subunit">
    <text evidence="1">Monomer.</text>
</comment>
<comment type="subcellular location">
    <subcellularLocation>
        <location evidence="1">Cytoplasm</location>
    </subcellularLocation>
</comment>
<comment type="similarity">
    <text evidence="4">Belongs to the cytochrome P450 family.</text>
</comment>
<dbReference type="EC" id="1.14.15.36" evidence="2"/>
<dbReference type="EMBL" id="AY575951">
    <property type="protein sequence ID" value="AAT40578.1"/>
    <property type="molecule type" value="Genomic_DNA"/>
</dbReference>
<dbReference type="EMBL" id="CP000511">
    <property type="protein sequence ID" value="ABM15932.1"/>
    <property type="molecule type" value="Genomic_DNA"/>
</dbReference>
<dbReference type="RefSeq" id="WP_011782302.1">
    <property type="nucleotide sequence ID" value="NZ_JACKSD010000224.1"/>
</dbReference>
<dbReference type="SMR" id="Q5IZM4"/>
<dbReference type="STRING" id="350058.Mvan_5161"/>
<dbReference type="KEGG" id="mva:Mvan_5161"/>
<dbReference type="eggNOG" id="COG2124">
    <property type="taxonomic scope" value="Bacteria"/>
</dbReference>
<dbReference type="HOGENOM" id="CLU_001570_15_0_11"/>
<dbReference type="Proteomes" id="UP000009159">
    <property type="component" value="Chromosome"/>
</dbReference>
<dbReference type="GO" id="GO:0005737">
    <property type="term" value="C:cytoplasm"/>
    <property type="evidence" value="ECO:0007669"/>
    <property type="project" value="UniProtKB-SubCell"/>
</dbReference>
<dbReference type="GO" id="GO:0020037">
    <property type="term" value="F:heme binding"/>
    <property type="evidence" value="ECO:0007669"/>
    <property type="project" value="InterPro"/>
</dbReference>
<dbReference type="GO" id="GO:0005506">
    <property type="term" value="F:iron ion binding"/>
    <property type="evidence" value="ECO:0007669"/>
    <property type="project" value="InterPro"/>
</dbReference>
<dbReference type="GO" id="GO:0008398">
    <property type="term" value="F:sterol 14-demethylase activity"/>
    <property type="evidence" value="ECO:0007669"/>
    <property type="project" value="UniProtKB-EC"/>
</dbReference>
<dbReference type="GO" id="GO:0016126">
    <property type="term" value="P:sterol biosynthetic process"/>
    <property type="evidence" value="ECO:0007669"/>
    <property type="project" value="UniProtKB-KW"/>
</dbReference>
<dbReference type="CDD" id="cd11042">
    <property type="entry name" value="CYP51-like"/>
    <property type="match status" value="1"/>
</dbReference>
<dbReference type="Gene3D" id="1.10.630.10">
    <property type="entry name" value="Cytochrome P450"/>
    <property type="match status" value="1"/>
</dbReference>
<dbReference type="InterPro" id="IPR050529">
    <property type="entry name" value="CYP450_sterol_14alpha_dmase"/>
</dbReference>
<dbReference type="InterPro" id="IPR001128">
    <property type="entry name" value="Cyt_P450"/>
</dbReference>
<dbReference type="InterPro" id="IPR017972">
    <property type="entry name" value="Cyt_P450_CS"/>
</dbReference>
<dbReference type="InterPro" id="IPR002403">
    <property type="entry name" value="Cyt_P450_E_grp-IV"/>
</dbReference>
<dbReference type="InterPro" id="IPR036396">
    <property type="entry name" value="Cyt_P450_sf"/>
</dbReference>
<dbReference type="PANTHER" id="PTHR24304:SF2">
    <property type="entry name" value="24-HYDROXYCHOLESTEROL 7-ALPHA-HYDROXYLASE"/>
    <property type="match status" value="1"/>
</dbReference>
<dbReference type="PANTHER" id="PTHR24304">
    <property type="entry name" value="CYTOCHROME P450 FAMILY 7"/>
    <property type="match status" value="1"/>
</dbReference>
<dbReference type="Pfam" id="PF00067">
    <property type="entry name" value="p450"/>
    <property type="match status" value="1"/>
</dbReference>
<dbReference type="PRINTS" id="PR00465">
    <property type="entry name" value="EP450IV"/>
</dbReference>
<dbReference type="PRINTS" id="PR00385">
    <property type="entry name" value="P450"/>
</dbReference>
<dbReference type="SUPFAM" id="SSF48264">
    <property type="entry name" value="Cytochrome P450"/>
    <property type="match status" value="1"/>
</dbReference>
<dbReference type="PROSITE" id="PS00086">
    <property type="entry name" value="CYTOCHROME_P450"/>
    <property type="match status" value="1"/>
</dbReference>
<gene>
    <name type="primary">cyp51</name>
    <name type="ordered locus">Mvan_5161</name>
</gene>
<organism>
    <name type="scientific">Mycolicibacterium vanbaalenii (strain DSM 7251 / JCM 13017 / BCRC 16820 / KCTC 9966 / NRRL B-24157 / PYR-1)</name>
    <name type="common">Mycobacterium vanbaalenii</name>
    <dbReference type="NCBI Taxonomy" id="350058"/>
    <lineage>
        <taxon>Bacteria</taxon>
        <taxon>Bacillati</taxon>
        <taxon>Actinomycetota</taxon>
        <taxon>Actinomycetes</taxon>
        <taxon>Mycobacteriales</taxon>
        <taxon>Mycobacteriaceae</taxon>
        <taxon>Mycolicibacterium</taxon>
    </lineage>
</organism>
<sequence>MTAVKEVPRVSGGEEEHGHLEEFRTDPIGLMKRVREECGDVGWFQLADKQVILLSGAEANEFFFRSSDSELNQAEAYPFMTPIFGEGVVFDADPERRAEMLHNTALRGEHMKGHATTIEAEVRKMIEGWGESGEIDLLEFFAELTIYTSTACLIGLKFRNQLDSRFANYYHLLERGTDPLCYVDPYLPIESFRIRDEARAGLVELVQDVMHGRIANPPKDKSDRDMLDVLVSIKDEDGNPRFTANEITGMFISLMFAGHHTSSGTSSWTLIELLRHPEFYAKVQQELDDLYADGQEVSFHALRQIPSLDNALKETLRLHPPLIILMRVAQDEFEVAGYPIHKGQMVAASPAISNRIPEDFPNPDDFDPDRYEKPRQEDLINRWTWIPFGAGKHRCVGAAFAQMQIKAIFSVLLREYEFEMAQPPESYQNDHSKMVVQLARPAKVRYRRRVRD</sequence>
<feature type="chain" id="PRO_0000052018" description="Sterol 14alpha-demethylase">
    <location>
        <begin position="1"/>
        <end position="452"/>
    </location>
</feature>
<feature type="region of interest" description="Disordered" evidence="3">
    <location>
        <begin position="1"/>
        <end position="20"/>
    </location>
</feature>
<feature type="binding site" evidence="2">
    <location>
        <position position="73"/>
    </location>
    <ligand>
        <name>heme b</name>
        <dbReference type="ChEBI" id="CHEBI:60344"/>
    </ligand>
</feature>
<feature type="binding site" evidence="2">
    <location>
        <position position="77"/>
    </location>
    <ligand>
        <name>heme b</name>
        <dbReference type="ChEBI" id="CHEBI:60344"/>
    </ligand>
</feature>
<feature type="binding site" evidence="2">
    <location>
        <position position="327"/>
    </location>
    <ligand>
        <name>heme b</name>
        <dbReference type="ChEBI" id="CHEBI:60344"/>
    </ligand>
</feature>
<feature type="binding site" evidence="2">
    <location>
        <position position="393"/>
    </location>
    <ligand>
        <name>heme b</name>
        <dbReference type="ChEBI" id="CHEBI:60344"/>
    </ligand>
</feature>
<feature type="binding site" description="axial binding residue" evidence="2">
    <location>
        <position position="395"/>
    </location>
    <ligand>
        <name>heme b</name>
        <dbReference type="ChEBI" id="CHEBI:60344"/>
    </ligand>
    <ligandPart>
        <name>Fe</name>
        <dbReference type="ChEBI" id="CHEBI:18248"/>
    </ligandPart>
</feature>
<reference key="1">
    <citation type="submission" date="2004-03" db="EMBL/GenBank/DDBJ databases">
        <title>The cytochromes p450 from PAH-degrading strain Mycobacterium vanbaalenii PYR-1.</title>
        <authorList>
            <person name="Brezna B."/>
            <person name="Stingley R.L."/>
            <person name="Freeman J.P."/>
            <person name="Khan A.A."/>
            <person name="Cerniglia C.E."/>
        </authorList>
    </citation>
    <scope>NUCLEOTIDE SEQUENCE [GENOMIC DNA]</scope>
</reference>
<reference key="2">
    <citation type="submission" date="2006-12" db="EMBL/GenBank/DDBJ databases">
        <title>Complete sequence of Mycobacterium vanbaalenii PYR-1.</title>
        <authorList>
            <consortium name="US DOE Joint Genome Institute"/>
            <person name="Copeland A."/>
            <person name="Lucas S."/>
            <person name="Lapidus A."/>
            <person name="Barry K."/>
            <person name="Detter J.C."/>
            <person name="Glavina del Rio T."/>
            <person name="Hammon N."/>
            <person name="Israni S."/>
            <person name="Dalin E."/>
            <person name="Tice H."/>
            <person name="Pitluck S."/>
            <person name="Singan V."/>
            <person name="Schmutz J."/>
            <person name="Larimer F."/>
            <person name="Land M."/>
            <person name="Hauser L."/>
            <person name="Kyrpides N."/>
            <person name="Anderson I.J."/>
            <person name="Miller C."/>
            <person name="Richardson P."/>
        </authorList>
    </citation>
    <scope>NUCLEOTIDE SEQUENCE [LARGE SCALE GENOMIC DNA]</scope>
    <source>
        <strain>DSM 7251 / JCM 13017 / BCRC 16820 / KCTC 9966 / NRRL B-24157 / PYR-1</strain>
    </source>
</reference>
<evidence type="ECO:0000250" key="1"/>
<evidence type="ECO:0000250" key="2">
    <source>
        <dbReference type="UniProtKB" id="P9WPP9"/>
    </source>
</evidence>
<evidence type="ECO:0000256" key="3">
    <source>
        <dbReference type="SAM" id="MobiDB-lite"/>
    </source>
</evidence>
<evidence type="ECO:0000305" key="4"/>
<keyword id="KW-0963">Cytoplasm</keyword>
<keyword id="KW-0349">Heme</keyword>
<keyword id="KW-0408">Iron</keyword>
<keyword id="KW-0444">Lipid biosynthesis</keyword>
<keyword id="KW-0443">Lipid metabolism</keyword>
<keyword id="KW-0479">Metal-binding</keyword>
<keyword id="KW-0503">Monooxygenase</keyword>
<keyword id="KW-0560">Oxidoreductase</keyword>
<keyword id="KW-0752">Steroid biosynthesis</keyword>
<keyword id="KW-0753">Steroid metabolism</keyword>
<keyword id="KW-0756">Sterol biosynthesis</keyword>
<keyword id="KW-1207">Sterol metabolism</keyword>
<protein>
    <recommendedName>
        <fullName>Sterol 14alpha-demethylase</fullName>
        <ecNumber evidence="2">1.14.15.36</ecNumber>
    </recommendedName>
    <alternativeName>
        <fullName>CYPLI</fullName>
    </alternativeName>
    <alternativeName>
        <fullName>Cytochrome P450 51</fullName>
    </alternativeName>
    <alternativeName>
        <fullName>Cytochrome P450-14DM</fullName>
    </alternativeName>
    <alternativeName>
        <fullName>Cytochrome P450-LIA1</fullName>
    </alternativeName>
    <alternativeName>
        <fullName>Sterol 14-alpha demethylase</fullName>
    </alternativeName>
</protein>
<proteinExistence type="inferred from homology"/>
<accession>Q5IZM4</accession>
<accession>A1TFI2</accession>